<evidence type="ECO:0000255" key="1">
    <source>
        <dbReference type="HAMAP-Rule" id="MF_01237"/>
    </source>
</evidence>
<name>NANA_STAA9</name>
<protein>
    <recommendedName>
        <fullName evidence="1">N-acetylneuraminate lyase</fullName>
        <shortName evidence="1">NAL</shortName>
        <shortName evidence="1">Neu5Ac lyase</shortName>
        <ecNumber evidence="1">4.1.3.3</ecNumber>
    </recommendedName>
    <alternativeName>
        <fullName evidence="1">N-acetylneuraminate pyruvate-lyase</fullName>
    </alternativeName>
    <alternativeName>
        <fullName evidence="1">N-acetylneuraminic acid aldolase</fullName>
    </alternativeName>
    <alternativeName>
        <fullName evidence="1">Sialate lyase</fullName>
    </alternativeName>
    <alternativeName>
        <fullName evidence="1">Sialic acid aldolase</fullName>
    </alternativeName>
    <alternativeName>
        <fullName evidence="1">Sialic acid lyase</fullName>
    </alternativeName>
</protein>
<accession>A5IPI2</accession>
<comment type="function">
    <text evidence="1">Catalyzes the reversible aldol cleavage of N-acetylneuraminic acid (sialic acid; Neu5Ac) to form pyruvate and N-acetylmannosamine (ManNAc) via a Schiff base intermediate.</text>
</comment>
<comment type="catalytic activity">
    <reaction evidence="1">
        <text>aceneuramate = aldehydo-N-acetyl-D-mannosamine + pyruvate</text>
        <dbReference type="Rhea" id="RHEA:23296"/>
        <dbReference type="ChEBI" id="CHEBI:15361"/>
        <dbReference type="ChEBI" id="CHEBI:17122"/>
        <dbReference type="ChEBI" id="CHEBI:173083"/>
        <dbReference type="EC" id="4.1.3.3"/>
    </reaction>
</comment>
<comment type="pathway">
    <text evidence="1">Amino-sugar metabolism; N-acetylneuraminate degradation; D-fructose 6-phosphate from N-acetylneuraminate: step 1/5.</text>
</comment>
<comment type="subunit">
    <text evidence="1">Homotetramer.</text>
</comment>
<comment type="subcellular location">
    <subcellularLocation>
        <location evidence="1">Cytoplasm</location>
    </subcellularLocation>
</comment>
<comment type="similarity">
    <text evidence="1">Belongs to the DapA family. NanA subfamily.</text>
</comment>
<keyword id="KW-0119">Carbohydrate metabolism</keyword>
<keyword id="KW-0963">Cytoplasm</keyword>
<keyword id="KW-0456">Lyase</keyword>
<keyword id="KW-0704">Schiff base</keyword>
<feature type="chain" id="PRO_1000085741" description="N-acetylneuraminate lyase">
    <location>
        <begin position="1"/>
        <end position="293"/>
    </location>
</feature>
<feature type="active site" description="Proton donor" evidence="1">
    <location>
        <position position="137"/>
    </location>
</feature>
<feature type="active site" description="Schiff-base intermediate with substrate" evidence="1">
    <location>
        <position position="165"/>
    </location>
</feature>
<feature type="binding site" evidence="1">
    <location>
        <position position="48"/>
    </location>
    <ligand>
        <name>aceneuramate</name>
        <dbReference type="ChEBI" id="CHEBI:173083"/>
    </ligand>
</feature>
<feature type="binding site" evidence="1">
    <location>
        <position position="49"/>
    </location>
    <ligand>
        <name>aceneuramate</name>
        <dbReference type="ChEBI" id="CHEBI:173083"/>
    </ligand>
</feature>
<feature type="binding site" evidence="1">
    <location>
        <position position="167"/>
    </location>
    <ligand>
        <name>aceneuramate</name>
        <dbReference type="ChEBI" id="CHEBI:173083"/>
    </ligand>
</feature>
<feature type="binding site" evidence="1">
    <location>
        <position position="189"/>
    </location>
    <ligand>
        <name>aceneuramate</name>
        <dbReference type="ChEBI" id="CHEBI:173083"/>
    </ligand>
</feature>
<feature type="binding site" evidence="1">
    <location>
        <position position="191"/>
    </location>
    <ligand>
        <name>aceneuramate</name>
        <dbReference type="ChEBI" id="CHEBI:173083"/>
    </ligand>
</feature>
<feature type="binding site" evidence="1">
    <location>
        <position position="192"/>
    </location>
    <ligand>
        <name>aceneuramate</name>
        <dbReference type="ChEBI" id="CHEBI:173083"/>
    </ligand>
</feature>
<feature type="binding site" evidence="1">
    <location>
        <position position="208"/>
    </location>
    <ligand>
        <name>aceneuramate</name>
        <dbReference type="ChEBI" id="CHEBI:173083"/>
    </ligand>
</feature>
<dbReference type="EC" id="4.1.3.3" evidence="1"/>
<dbReference type="EMBL" id="CP000703">
    <property type="protein sequence ID" value="ABQ48105.1"/>
    <property type="molecule type" value="Genomic_DNA"/>
</dbReference>
<dbReference type="RefSeq" id="WP_001030736.1">
    <property type="nucleotide sequence ID" value="NC_009487.1"/>
</dbReference>
<dbReference type="SMR" id="A5IPI2"/>
<dbReference type="KEGG" id="saj:SaurJH9_0298"/>
<dbReference type="HOGENOM" id="CLU_049343_5_1_9"/>
<dbReference type="UniPathway" id="UPA00629">
    <property type="reaction ID" value="UER00680"/>
</dbReference>
<dbReference type="GO" id="GO:0005829">
    <property type="term" value="C:cytosol"/>
    <property type="evidence" value="ECO:0007669"/>
    <property type="project" value="TreeGrafter"/>
</dbReference>
<dbReference type="GO" id="GO:0008747">
    <property type="term" value="F:N-acetylneuraminate lyase activity"/>
    <property type="evidence" value="ECO:0007669"/>
    <property type="project" value="UniProtKB-UniRule"/>
</dbReference>
<dbReference type="GO" id="GO:0005975">
    <property type="term" value="P:carbohydrate metabolic process"/>
    <property type="evidence" value="ECO:0007669"/>
    <property type="project" value="UniProtKB-UniRule"/>
</dbReference>
<dbReference type="GO" id="GO:0019262">
    <property type="term" value="P:N-acetylneuraminate catabolic process"/>
    <property type="evidence" value="ECO:0007669"/>
    <property type="project" value="UniProtKB-UniRule"/>
</dbReference>
<dbReference type="CDD" id="cd00954">
    <property type="entry name" value="NAL"/>
    <property type="match status" value="1"/>
</dbReference>
<dbReference type="FunFam" id="3.20.20.70:FF:000039">
    <property type="entry name" value="N-acetylneuraminate lyase"/>
    <property type="match status" value="1"/>
</dbReference>
<dbReference type="Gene3D" id="3.20.20.70">
    <property type="entry name" value="Aldolase class I"/>
    <property type="match status" value="1"/>
</dbReference>
<dbReference type="HAMAP" id="MF_01237">
    <property type="entry name" value="N_acetylneuram_lyase"/>
    <property type="match status" value="1"/>
</dbReference>
<dbReference type="InterPro" id="IPR013785">
    <property type="entry name" value="Aldolase_TIM"/>
</dbReference>
<dbReference type="InterPro" id="IPR002220">
    <property type="entry name" value="DapA-like"/>
</dbReference>
<dbReference type="InterPro" id="IPR005264">
    <property type="entry name" value="NanA"/>
</dbReference>
<dbReference type="InterPro" id="IPR020625">
    <property type="entry name" value="Schiff_base-form_aldolases_AS"/>
</dbReference>
<dbReference type="NCBIfam" id="NF003164">
    <property type="entry name" value="PRK04147.1"/>
    <property type="match status" value="1"/>
</dbReference>
<dbReference type="PANTHER" id="PTHR42849">
    <property type="entry name" value="N-ACETYLNEURAMINATE LYASE"/>
    <property type="match status" value="1"/>
</dbReference>
<dbReference type="PANTHER" id="PTHR42849:SF1">
    <property type="entry name" value="N-ACETYLNEURAMINATE LYASE"/>
    <property type="match status" value="1"/>
</dbReference>
<dbReference type="Pfam" id="PF00701">
    <property type="entry name" value="DHDPS"/>
    <property type="match status" value="1"/>
</dbReference>
<dbReference type="PIRSF" id="PIRSF001365">
    <property type="entry name" value="DHDPS"/>
    <property type="match status" value="1"/>
</dbReference>
<dbReference type="PRINTS" id="PR00146">
    <property type="entry name" value="DHPICSNTHASE"/>
</dbReference>
<dbReference type="SMART" id="SM01130">
    <property type="entry name" value="DHDPS"/>
    <property type="match status" value="1"/>
</dbReference>
<dbReference type="SUPFAM" id="SSF51569">
    <property type="entry name" value="Aldolase"/>
    <property type="match status" value="1"/>
</dbReference>
<dbReference type="PROSITE" id="PS00666">
    <property type="entry name" value="DHDPS_2"/>
    <property type="match status" value="1"/>
</dbReference>
<proteinExistence type="inferred from homology"/>
<reference key="1">
    <citation type="submission" date="2007-05" db="EMBL/GenBank/DDBJ databases">
        <title>Complete sequence of chromosome of Staphylococcus aureus subsp. aureus JH9.</title>
        <authorList>
            <consortium name="US DOE Joint Genome Institute"/>
            <person name="Copeland A."/>
            <person name="Lucas S."/>
            <person name="Lapidus A."/>
            <person name="Barry K."/>
            <person name="Detter J.C."/>
            <person name="Glavina del Rio T."/>
            <person name="Hammon N."/>
            <person name="Israni S."/>
            <person name="Pitluck S."/>
            <person name="Chain P."/>
            <person name="Malfatti S."/>
            <person name="Shin M."/>
            <person name="Vergez L."/>
            <person name="Schmutz J."/>
            <person name="Larimer F."/>
            <person name="Land M."/>
            <person name="Hauser L."/>
            <person name="Kyrpides N."/>
            <person name="Kim E."/>
            <person name="Tomasz A."/>
            <person name="Richardson P."/>
        </authorList>
    </citation>
    <scope>NUCLEOTIDE SEQUENCE [LARGE SCALE GENOMIC DNA]</scope>
    <source>
        <strain>JH9</strain>
    </source>
</reference>
<gene>
    <name evidence="1" type="primary">nanA</name>
    <name type="ordered locus">SaurJH9_0298</name>
</gene>
<organism>
    <name type="scientific">Staphylococcus aureus (strain JH9)</name>
    <dbReference type="NCBI Taxonomy" id="359786"/>
    <lineage>
        <taxon>Bacteria</taxon>
        <taxon>Bacillati</taxon>
        <taxon>Bacillota</taxon>
        <taxon>Bacilli</taxon>
        <taxon>Bacillales</taxon>
        <taxon>Staphylococcaceae</taxon>
        <taxon>Staphylococcus</taxon>
    </lineage>
</organism>
<sequence>MNKDLKGLYAALLVPFDENGQVNEQGLKQIAQNAIETEELDGLYVNGSSGENFLLNTEQKKQVFKVAKEAVGDKVKLIAQVGSLDLNEAIELGKYATELGYDALSAVTPFYYPFTFEEIRDYYFDIIEATQNNMIIYAIPDLTGVNISIEQFSELFNHEKIVGVKYTAPNFFLLERIRKAFPDKLILSGFDEMLVQATISGVDGAIGSTYNVNGRRARKIFDLARQGQIQEAYQLQHDSNDIIETVLSMGIYPTLKEILRHRDIDAGLPKRPFKPFNEAHRQTLDQLIAKYDL</sequence>